<gene>
    <name evidence="4" type="primary">Actmap</name>
</gene>
<organism evidence="7">
    <name type="scientific">Mus musculus</name>
    <name type="common">Mouse</name>
    <dbReference type="NCBI Taxonomy" id="10090"/>
    <lineage>
        <taxon>Eukaryota</taxon>
        <taxon>Metazoa</taxon>
        <taxon>Chordata</taxon>
        <taxon>Craniata</taxon>
        <taxon>Vertebrata</taxon>
        <taxon>Euteleostomi</taxon>
        <taxon>Mammalia</taxon>
        <taxon>Eutheria</taxon>
        <taxon>Euarchontoglires</taxon>
        <taxon>Glires</taxon>
        <taxon>Rodentia</taxon>
        <taxon>Myomorpha</taxon>
        <taxon>Muroidea</taxon>
        <taxon>Muridae</taxon>
        <taxon>Murinae</taxon>
        <taxon>Mus</taxon>
        <taxon>Mus</taxon>
    </lineage>
</organism>
<comment type="function">
    <text evidence="3">Actin maturation protease that specifically mediates the cleavage of immature acetylated N-terminal actin, thereby contributing to actin maturation (PubMed:36173861). Cleaves N-terminal acetylated methionine of immature cytoplasmic beta- and gamma-actins Actb and Actg1 after translation (PubMed:36173861). Cleaves N-terminal acetylated cysteine of muscle alpha-actins Acta1, Actc1 and Acta2 after canonical removal of N-terminal methionine (PubMed:36173861).</text>
</comment>
<comment type="catalytic activity">
    <molecule>Actin maturation protease</molecule>
    <reaction evidence="3">
        <text>N-terminal N(alpha)-acetyl-L-methionyl-L-aspartyl-[protein] + H2O = N-terminal L-aspartyl-[protein] + N-acetyl-L-methionine</text>
        <dbReference type="Rhea" id="RHEA:74571"/>
        <dbReference type="Rhea" id="RHEA-COMP:12669"/>
        <dbReference type="Rhea" id="RHEA-COMP:12693"/>
        <dbReference type="ChEBI" id="CHEBI:15377"/>
        <dbReference type="ChEBI" id="CHEBI:64720"/>
        <dbReference type="ChEBI" id="CHEBI:71670"/>
        <dbReference type="ChEBI" id="CHEBI:133063"/>
    </reaction>
    <physiologicalReaction direction="left-to-right" evidence="3">
        <dbReference type="Rhea" id="RHEA:74572"/>
    </physiologicalReaction>
</comment>
<comment type="catalytic activity">
    <molecule>Actin maturation protease</molecule>
    <reaction evidence="3">
        <text>N-terminal N(alpha)-acetyl-L-methionyl-L-glutamyl-[protein] + H2O = N-terminal L-glutamyl-[protein] + N-acetyl-L-methionine</text>
        <dbReference type="Rhea" id="RHEA:74575"/>
        <dbReference type="Rhea" id="RHEA-COMP:12668"/>
        <dbReference type="Rhea" id="RHEA-COMP:12697"/>
        <dbReference type="ChEBI" id="CHEBI:15377"/>
        <dbReference type="ChEBI" id="CHEBI:64721"/>
        <dbReference type="ChEBI" id="CHEBI:71670"/>
        <dbReference type="ChEBI" id="CHEBI:133360"/>
    </reaction>
    <physiologicalReaction direction="left-to-right" evidence="3">
        <dbReference type="Rhea" id="RHEA:74576"/>
    </physiologicalReaction>
</comment>
<comment type="catalytic activity">
    <molecule>Actin maturation protease</molecule>
    <reaction evidence="3">
        <text>N-terminal N(alpha)-acetyl-L-cysteinyl-L-aspartyl-[protein] + H2O = N-terminal L-aspartyl-[protein] + N-acetyl-L-cysteine</text>
        <dbReference type="Rhea" id="RHEA:74579"/>
        <dbReference type="Rhea" id="RHEA-COMP:12669"/>
        <dbReference type="Rhea" id="RHEA-COMP:18395"/>
        <dbReference type="ChEBI" id="CHEBI:15377"/>
        <dbReference type="ChEBI" id="CHEBI:64720"/>
        <dbReference type="ChEBI" id="CHEBI:78236"/>
        <dbReference type="ChEBI" id="CHEBI:193599"/>
    </reaction>
    <physiologicalReaction direction="left-to-right" evidence="3">
        <dbReference type="Rhea" id="RHEA:74580"/>
    </physiologicalReaction>
</comment>
<comment type="catalytic activity">
    <molecule>Actin maturation protease</molecule>
    <reaction evidence="3">
        <text>N-terminal N(alpha)-acetyl-L-cysteinyl-L-glutamyl-[protein] + H2O = N-terminal L-glutamyl-[protein] + N-acetyl-L-cysteine</text>
        <dbReference type="Rhea" id="RHEA:74583"/>
        <dbReference type="Rhea" id="RHEA-COMP:12668"/>
        <dbReference type="Rhea" id="RHEA-COMP:18396"/>
        <dbReference type="ChEBI" id="CHEBI:15377"/>
        <dbReference type="ChEBI" id="CHEBI:64721"/>
        <dbReference type="ChEBI" id="CHEBI:78236"/>
        <dbReference type="ChEBI" id="CHEBI:193601"/>
    </reaction>
    <physiologicalReaction direction="left-to-right" evidence="3">
        <dbReference type="Rhea" id="RHEA:74584"/>
    </physiologicalReaction>
</comment>
<comment type="subunit">
    <text evidence="1">Interacts (via N-terminus) with PFN2 isoforms 1/IIa and 2/IIb; the interactions may facilitate efficient cleavage of the acetylated N-terminus of immature actin (By similarity). Interacts with PFN1 (By similarity).</text>
</comment>
<comment type="subcellular location">
    <subcellularLocation>
        <location evidence="6">Cytoplasm</location>
    </subcellularLocation>
</comment>
<comment type="alternative products">
    <event type="alternative splicing"/>
    <isoform>
        <id>J3QPC3-1</id>
        <name>1</name>
        <sequence type="displayed"/>
    </isoform>
    <isoform>
        <id>J3QPC3-2</id>
        <name>2</name>
        <sequence type="described" ref="VSP_061770 VSP_061771"/>
    </isoform>
</comment>
<comment type="domain">
    <text evidence="1">The N-terminal proline-rich disordered region contributes to the interaction with PFN2.</text>
</comment>
<comment type="disruption phenotype">
    <text evidence="3">Animals are alive, but suffer from muscle weakness (PubMed:36173861). Absence of cytoplasmic actin processing in intestine and kidney (PubMed:36173861). Accumulation of immature alpha-skeletal muscle (Acta1), alpha-cardiac muscle (Actc1), and alpha-smooth muscle (Actc2) actin with N-terminal acetylated cysteine (PubMed:36173861). Undetectable actin maturation and accumulation of immature actin in acetylated and methionated state in intestine and kidney, however no effect on the total levels of actin (PubMed:36173861). Shorter sarcomeric thin filaments in skeletal muscle, decrease in muscle function and progressive accumulation of centralized nuclei, a common hallmark of myopathies (PubMed:36173861).</text>
</comment>
<comment type="similarity">
    <text evidence="5">Belongs to the ACTMAP family.</text>
</comment>
<feature type="chain" id="PRO_0000457346" description="Actin maturation protease">
    <location>
        <begin position="1"/>
        <end position="361"/>
    </location>
</feature>
<feature type="region of interest" description="Disordered" evidence="2">
    <location>
        <begin position="1"/>
        <end position="75"/>
    </location>
</feature>
<feature type="region of interest" description="Peptidase C39-like" evidence="1">
    <location>
        <begin position="134"/>
        <end position="254"/>
    </location>
</feature>
<feature type="compositionally biased region" description="Pro residues" evidence="2">
    <location>
        <begin position="24"/>
        <end position="33"/>
    </location>
</feature>
<feature type="compositionally biased region" description="Pro residues" evidence="2">
    <location>
        <begin position="52"/>
        <end position="72"/>
    </location>
</feature>
<feature type="active site" evidence="1">
    <location>
        <position position="142"/>
    </location>
</feature>
<feature type="splice variant" id="VSP_061770" description="In isoform 2.">
    <original>Y</original>
    <variation>W</variation>
    <location>
        <position position="336"/>
    </location>
</feature>
<feature type="splice variant" id="VSP_061771" description="In isoform 2.">
    <location>
        <begin position="337"/>
        <end position="361"/>
    </location>
</feature>
<reference evidence="7" key="1">
    <citation type="journal article" date="2009" name="PLoS Biol.">
        <title>Lineage-specific biology revealed by a finished genome assembly of the mouse.</title>
        <authorList>
            <person name="Church D.M."/>
            <person name="Goodstadt L."/>
            <person name="Hillier L.W."/>
            <person name="Zody M.C."/>
            <person name="Goldstein S."/>
            <person name="She X."/>
            <person name="Bult C.J."/>
            <person name="Agarwala R."/>
            <person name="Cherry J.L."/>
            <person name="DiCuccio M."/>
            <person name="Hlavina W."/>
            <person name="Kapustin Y."/>
            <person name="Meric P."/>
            <person name="Maglott D."/>
            <person name="Birtle Z."/>
            <person name="Marques A.C."/>
            <person name="Graves T."/>
            <person name="Zhou S."/>
            <person name="Teague B."/>
            <person name="Potamousis K."/>
            <person name="Churas C."/>
            <person name="Place M."/>
            <person name="Herschleb J."/>
            <person name="Runnheim R."/>
            <person name="Forrest D."/>
            <person name="Amos-Landgraf J."/>
            <person name="Schwartz D.C."/>
            <person name="Cheng Z."/>
            <person name="Lindblad-Toh K."/>
            <person name="Eichler E.E."/>
            <person name="Ponting C.P."/>
        </authorList>
    </citation>
    <scope>NUCLEOTIDE SEQUENCE [LARGE SCALE GENOMIC DNA]</scope>
    <source>
        <strain evidence="7">C57BL/6J</strain>
    </source>
</reference>
<reference evidence="5" key="2">
    <citation type="journal article" date="2022" name="Science">
        <title>Actin maturation requires the ACTMAP/C19orf54 protease.</title>
        <authorList>
            <person name="Haahr P."/>
            <person name="Galli R.A."/>
            <person name="van den Hengel L.G."/>
            <person name="Bleijerveld O.B."/>
            <person name="Kazokaite-Adomaitiene J."/>
            <person name="Song J.Y."/>
            <person name="Kroese L.J."/>
            <person name="Krimpenfort P."/>
            <person name="Baltissen M.P."/>
            <person name="Vermeulen M."/>
            <person name="Ottenheijm C.A.C."/>
            <person name="Brummelkamp T.R."/>
        </authorList>
    </citation>
    <scope>FUNCTION</scope>
    <scope>CATALYTIC ACTIVITY</scope>
    <scope>SUBCELLULAR LOCATION</scope>
    <scope>DISRUPTION PHENOTYPE</scope>
</reference>
<accession>J3QPC3</accession>
<accession>D3Z7G4</accession>
<dbReference type="EC" id="3.4.11.-" evidence="3"/>
<dbReference type="CCDS" id="CCDS57529.1">
    <molecule id="J3QPC3-1"/>
</dbReference>
<dbReference type="CCDS" id="CCDS71921.1">
    <molecule id="J3QPC3-2"/>
</dbReference>
<dbReference type="RefSeq" id="NP_001230817.1">
    <molecule id="J3QPC3-1"/>
    <property type="nucleotide sequence ID" value="NM_001243888.1"/>
</dbReference>
<dbReference type="RefSeq" id="NP_001277442.1">
    <molecule id="J3QPC3-2"/>
    <property type="nucleotide sequence ID" value="NM_001290513.1"/>
</dbReference>
<dbReference type="RefSeq" id="XP_011248923.1">
    <property type="nucleotide sequence ID" value="XM_011250621.2"/>
</dbReference>
<dbReference type="RefSeq" id="XP_017177822.1">
    <property type="nucleotide sequence ID" value="XM_017322333.1"/>
</dbReference>
<dbReference type="SMR" id="J3QPC3"/>
<dbReference type="FunCoup" id="J3QPC3">
    <property type="interactions" value="25"/>
</dbReference>
<dbReference type="STRING" id="10090.ENSMUSP00000137189"/>
<dbReference type="PhosphoSitePlus" id="J3QPC3"/>
<dbReference type="PaxDb" id="10090-ENSMUSP00000137189"/>
<dbReference type="PRIDE" id="J3QPC3"/>
<dbReference type="ProteomicsDB" id="316152"/>
<dbReference type="ProteomicsDB" id="353647"/>
<dbReference type="Antibodypedia" id="45214">
    <property type="antibodies" value="62 antibodies from 14 providers"/>
</dbReference>
<dbReference type="Ensembl" id="ENSMUST00000108379.8">
    <molecule id="J3QPC3-2"/>
    <property type="protein sequence ID" value="ENSMUSP00000104016.2"/>
    <property type="gene ID" value="ENSMUSG00000078786.10"/>
</dbReference>
<dbReference type="Ensembl" id="ENSMUST00000179391.8">
    <molecule id="J3QPC3-1"/>
    <property type="protein sequence ID" value="ENSMUSP00000137189.2"/>
    <property type="gene ID" value="ENSMUSG00000078786.10"/>
</dbReference>
<dbReference type="GeneID" id="414069"/>
<dbReference type="KEGG" id="mmu:414069"/>
<dbReference type="UCSC" id="uc029wea.1">
    <molecule id="J3QPC3-1"/>
    <property type="organism name" value="mouse"/>
</dbReference>
<dbReference type="AGR" id="MGI:3041247"/>
<dbReference type="CTD" id="284325"/>
<dbReference type="MGI" id="MGI:3041247">
    <property type="gene designation" value="Actmap"/>
</dbReference>
<dbReference type="VEuPathDB" id="HostDB:ENSMUSG00000078786"/>
<dbReference type="eggNOG" id="ENOG502QQQD">
    <property type="taxonomic scope" value="Eukaryota"/>
</dbReference>
<dbReference type="GeneTree" id="ENSGT00390000012368"/>
<dbReference type="HOGENOM" id="CLU_077492_1_0_1"/>
<dbReference type="InParanoid" id="J3QPC3"/>
<dbReference type="OMA" id="QLWDYEQ"/>
<dbReference type="OrthoDB" id="198816at2759"/>
<dbReference type="PhylomeDB" id="J3QPC3"/>
<dbReference type="TreeFam" id="TF314051"/>
<dbReference type="BioGRID-ORCS" id="414069">
    <property type="hits" value="1 hit in 77 CRISPR screens"/>
</dbReference>
<dbReference type="PRO" id="PR:J3QPC3"/>
<dbReference type="Proteomes" id="UP000000589">
    <property type="component" value="Chromosome 7"/>
</dbReference>
<dbReference type="RNAct" id="J3QPC3">
    <property type="molecule type" value="protein"/>
</dbReference>
<dbReference type="Bgee" id="ENSMUSG00000078786">
    <property type="expression patterns" value="Expressed in embryonic post-anal tail and 92 other cell types or tissues"/>
</dbReference>
<dbReference type="ExpressionAtlas" id="J3QPC3">
    <property type="expression patterns" value="baseline and differential"/>
</dbReference>
<dbReference type="GO" id="GO:0005737">
    <property type="term" value="C:cytoplasm"/>
    <property type="evidence" value="ECO:0007669"/>
    <property type="project" value="UniProtKB-SubCell"/>
</dbReference>
<dbReference type="GO" id="GO:0070005">
    <property type="term" value="F:cysteine-type aminopeptidase activity"/>
    <property type="evidence" value="ECO:0007669"/>
    <property type="project" value="Ensembl"/>
</dbReference>
<dbReference type="GO" id="GO:0004239">
    <property type="term" value="F:initiator methionyl aminopeptidase activity"/>
    <property type="evidence" value="ECO:0000314"/>
    <property type="project" value="UniProtKB"/>
</dbReference>
<dbReference type="GO" id="GO:0016485">
    <property type="term" value="P:protein processing"/>
    <property type="evidence" value="ECO:0000314"/>
    <property type="project" value="UniProtKB"/>
</dbReference>
<dbReference type="InterPro" id="IPR040043">
    <property type="entry name" value="ACTMAP"/>
</dbReference>
<dbReference type="PANTHER" id="PTHR28631:SF1">
    <property type="entry name" value="ACTIN MATURATION PROTEASE"/>
    <property type="match status" value="1"/>
</dbReference>
<dbReference type="PANTHER" id="PTHR28631">
    <property type="entry name" value="UPF0692 PROTEIN C19ORF54"/>
    <property type="match status" value="1"/>
</dbReference>
<dbReference type="Pfam" id="PF21646">
    <property type="entry name" value="ACTMAP-like_C"/>
    <property type="match status" value="1"/>
</dbReference>
<dbReference type="SUPFAM" id="SSF101447">
    <property type="entry name" value="Formin homology 2 domain (FH2 domain)"/>
    <property type="match status" value="1"/>
</dbReference>
<protein>
    <recommendedName>
        <fullName evidence="4">Actin maturation protease</fullName>
        <ecNumber evidence="3">3.4.11.-</ecNumber>
    </recommendedName>
    <alternativeName>
        <fullName evidence="5">Actin aminopeptidase ACTMAP</fullName>
    </alternativeName>
</protein>
<proteinExistence type="evidence at protein level"/>
<sequence>MTSPCSFPLKPTISPIIHETPDTNIPPPLPLNPPDLALPSPPCSLHTSISSPLPPPPPPPAPPPPPPPPPLPSAVEPVLPHVYGLKNSQLLKEALEKAGPAPKGKEDVKRLLKLHKDRFRSDLQWILFCADLPSCIQEGPQCGLVALWMAEALLSTPDSVSLERLVQVAKERGYTAQGEMFSVADMAKLAQETLDCQAELLCGGLGGPNRERVLQHLITGHPLLIPYDEDFNHEPCQKKGHKAHWAVSAGVLIGVQNVPSPGYIEDSELPGLFHPVPGAPHQPPSFPEESSPGALFLLSKQGKSWHYQLWDYSQVRESNLQLTDFSPARAADGQVYVVPAGGVEAGLCGQALLLRPQEGSH</sequence>
<keyword id="KW-0025">Alternative splicing</keyword>
<keyword id="KW-0031">Aminopeptidase</keyword>
<keyword id="KW-0963">Cytoplasm</keyword>
<keyword id="KW-0378">Hydrolase</keyword>
<keyword id="KW-0645">Protease</keyword>
<keyword id="KW-1185">Reference proteome</keyword>
<evidence type="ECO:0000250" key="1">
    <source>
        <dbReference type="UniProtKB" id="Q5BKX5"/>
    </source>
</evidence>
<evidence type="ECO:0000256" key="2">
    <source>
        <dbReference type="SAM" id="MobiDB-lite"/>
    </source>
</evidence>
<evidence type="ECO:0000269" key="3">
    <source>
    </source>
</evidence>
<evidence type="ECO:0000303" key="4">
    <source>
    </source>
</evidence>
<evidence type="ECO:0000305" key="5"/>
<evidence type="ECO:0000305" key="6">
    <source>
    </source>
</evidence>
<evidence type="ECO:0000312" key="7">
    <source>
        <dbReference type="Proteomes" id="UP000000589"/>
    </source>
</evidence>
<name>ACTMP_MOUSE</name>